<proteinExistence type="inferred from homology"/>
<protein>
    <recommendedName>
        <fullName>Rod shape-determining protein MreD</fullName>
    </recommendedName>
</protein>
<gene>
    <name type="primary">mreD</name>
    <name type="ordered locus">Z4607</name>
    <name type="ordered locus">ECs4121</name>
</gene>
<reference key="1">
    <citation type="journal article" date="2001" name="Nature">
        <title>Genome sequence of enterohaemorrhagic Escherichia coli O157:H7.</title>
        <authorList>
            <person name="Perna N.T."/>
            <person name="Plunkett G. III"/>
            <person name="Burland V."/>
            <person name="Mau B."/>
            <person name="Glasner J.D."/>
            <person name="Rose D.J."/>
            <person name="Mayhew G.F."/>
            <person name="Evans P.S."/>
            <person name="Gregor J."/>
            <person name="Kirkpatrick H.A."/>
            <person name="Posfai G."/>
            <person name="Hackett J."/>
            <person name="Klink S."/>
            <person name="Boutin A."/>
            <person name="Shao Y."/>
            <person name="Miller L."/>
            <person name="Grotbeck E.J."/>
            <person name="Davis N.W."/>
            <person name="Lim A."/>
            <person name="Dimalanta E.T."/>
            <person name="Potamousis K."/>
            <person name="Apodaca J."/>
            <person name="Anantharaman T.S."/>
            <person name="Lin J."/>
            <person name="Yen G."/>
            <person name="Schwartz D.C."/>
            <person name="Welch R.A."/>
            <person name="Blattner F.R."/>
        </authorList>
    </citation>
    <scope>NUCLEOTIDE SEQUENCE [LARGE SCALE GENOMIC DNA]</scope>
    <source>
        <strain>O157:H7 / EDL933 / ATCC 700927 / EHEC</strain>
    </source>
</reference>
<reference key="2">
    <citation type="journal article" date="2001" name="DNA Res.">
        <title>Complete genome sequence of enterohemorrhagic Escherichia coli O157:H7 and genomic comparison with a laboratory strain K-12.</title>
        <authorList>
            <person name="Hayashi T."/>
            <person name="Makino K."/>
            <person name="Ohnishi M."/>
            <person name="Kurokawa K."/>
            <person name="Ishii K."/>
            <person name="Yokoyama K."/>
            <person name="Han C.-G."/>
            <person name="Ohtsubo E."/>
            <person name="Nakayama K."/>
            <person name="Murata T."/>
            <person name="Tanaka M."/>
            <person name="Tobe T."/>
            <person name="Iida T."/>
            <person name="Takami H."/>
            <person name="Honda T."/>
            <person name="Sasakawa C."/>
            <person name="Ogasawara N."/>
            <person name="Yasunaga T."/>
            <person name="Kuhara S."/>
            <person name="Shiba T."/>
            <person name="Hattori M."/>
            <person name="Shinagawa H."/>
        </authorList>
    </citation>
    <scope>NUCLEOTIDE SEQUENCE [LARGE SCALE GENOMIC DNA]</scope>
    <source>
        <strain>O157:H7 / Sakai / RIMD 0509952 / EHEC</strain>
    </source>
</reference>
<evidence type="ECO:0000250" key="1"/>
<evidence type="ECO:0000255" key="2"/>
<evidence type="ECO:0000305" key="3"/>
<feature type="chain" id="PRO_0000062771" description="Rod shape-determining protein MreD">
    <location>
        <begin position="1"/>
        <end position="162"/>
    </location>
</feature>
<feature type="topological domain" description="Periplasmic" evidence="2">
    <location>
        <begin position="1"/>
        <end position="9"/>
    </location>
</feature>
<feature type="transmembrane region" description="Helical" evidence="2">
    <location>
        <begin position="10"/>
        <end position="30"/>
    </location>
</feature>
<feature type="transmembrane region" description="Helical" evidence="2">
    <location>
        <begin position="31"/>
        <end position="51"/>
    </location>
</feature>
<feature type="topological domain" description="Periplasmic" evidence="2">
    <location>
        <begin position="52"/>
        <end position="55"/>
    </location>
</feature>
<feature type="transmembrane region" description="Helical" evidence="2">
    <location>
        <begin position="56"/>
        <end position="76"/>
    </location>
</feature>
<feature type="topological domain" description="Cytoplasmic" evidence="2">
    <location>
        <begin position="77"/>
        <end position="105"/>
    </location>
</feature>
<feature type="transmembrane region" description="Helical" evidence="2">
    <location>
        <begin position="106"/>
        <end position="126"/>
    </location>
</feature>
<feature type="topological domain" description="Periplasmic" evidence="2">
    <location>
        <begin position="127"/>
        <end position="131"/>
    </location>
</feature>
<feature type="transmembrane region" description="Helical" evidence="2">
    <location>
        <begin position="132"/>
        <end position="152"/>
    </location>
</feature>
<feature type="topological domain" description="Cytoplasmic" evidence="2">
    <location>
        <begin position="153"/>
        <end position="162"/>
    </location>
</feature>
<name>MRED_ECO57</name>
<accession>P0ABH6</accession>
<accession>P16927</accession>
<keyword id="KW-0997">Cell inner membrane</keyword>
<keyword id="KW-1003">Cell membrane</keyword>
<keyword id="KW-0133">Cell shape</keyword>
<keyword id="KW-0472">Membrane</keyword>
<keyword id="KW-1185">Reference proteome</keyword>
<keyword id="KW-0812">Transmembrane</keyword>
<keyword id="KW-1133">Transmembrane helix</keyword>
<dbReference type="EMBL" id="AE005174">
    <property type="protein sequence ID" value="AAG58376.1"/>
    <property type="molecule type" value="Genomic_DNA"/>
</dbReference>
<dbReference type="EMBL" id="BA000007">
    <property type="protein sequence ID" value="BAB37544.1"/>
    <property type="molecule type" value="Genomic_DNA"/>
</dbReference>
<dbReference type="PIR" id="A91144">
    <property type="entry name" value="A91144"/>
</dbReference>
<dbReference type="PIR" id="D85989">
    <property type="entry name" value="D85989"/>
</dbReference>
<dbReference type="RefSeq" id="NP_312148.1">
    <property type="nucleotide sequence ID" value="NC_002695.1"/>
</dbReference>
<dbReference type="RefSeq" id="WP_000179409.1">
    <property type="nucleotide sequence ID" value="NZ_VOAI01000014.1"/>
</dbReference>
<dbReference type="SMR" id="P0ABH6"/>
<dbReference type="STRING" id="155864.Z4607"/>
<dbReference type="GeneID" id="916032"/>
<dbReference type="GeneID" id="93778737"/>
<dbReference type="KEGG" id="ece:Z4607"/>
<dbReference type="KEGG" id="ecs:ECs_4121"/>
<dbReference type="PATRIC" id="fig|386585.9.peg.4302"/>
<dbReference type="eggNOG" id="COG2891">
    <property type="taxonomic scope" value="Bacteria"/>
</dbReference>
<dbReference type="HOGENOM" id="CLU_119315_0_1_6"/>
<dbReference type="OMA" id="YWAMALP"/>
<dbReference type="Proteomes" id="UP000000558">
    <property type="component" value="Chromosome"/>
</dbReference>
<dbReference type="Proteomes" id="UP000002519">
    <property type="component" value="Chromosome"/>
</dbReference>
<dbReference type="GO" id="GO:0005886">
    <property type="term" value="C:plasma membrane"/>
    <property type="evidence" value="ECO:0007669"/>
    <property type="project" value="UniProtKB-SubCell"/>
</dbReference>
<dbReference type="GO" id="GO:0008360">
    <property type="term" value="P:regulation of cell shape"/>
    <property type="evidence" value="ECO:0007669"/>
    <property type="project" value="UniProtKB-KW"/>
</dbReference>
<dbReference type="InterPro" id="IPR007227">
    <property type="entry name" value="Cell_shape_determining_MreD"/>
</dbReference>
<dbReference type="InterPro" id="IPR026034">
    <property type="entry name" value="MreD_proteobac"/>
</dbReference>
<dbReference type="NCBIfam" id="NF008282">
    <property type="entry name" value="PRK11060.1"/>
    <property type="match status" value="1"/>
</dbReference>
<dbReference type="NCBIfam" id="TIGR03426">
    <property type="entry name" value="shape_MreD"/>
    <property type="match status" value="1"/>
</dbReference>
<dbReference type="PANTHER" id="PTHR37484">
    <property type="entry name" value="ROD SHAPE-DETERMINING PROTEIN MRED"/>
    <property type="match status" value="1"/>
</dbReference>
<dbReference type="PANTHER" id="PTHR37484:SF1">
    <property type="entry name" value="ROD SHAPE-DETERMINING PROTEIN MRED"/>
    <property type="match status" value="1"/>
</dbReference>
<dbReference type="Pfam" id="PF04093">
    <property type="entry name" value="MreD"/>
    <property type="match status" value="1"/>
</dbReference>
<dbReference type="PIRSF" id="PIRSF018472">
    <property type="entry name" value="MreD_proteobac"/>
    <property type="match status" value="1"/>
</dbReference>
<sequence>MASYRSQGRWVIWLSFLIALLLQIMPWPDNLIVFRPNWVLLILLYWILALPHRVNVGTGFVMGAILDLISGSTLGVRVLAMSIIAYLVALKYQLFRNLALWQQALVVMLLSLVVDIIVFWAEFLVINVSFRPEVFWSSVVNGVLWPWIFLLMRKVRQQFAVQ</sequence>
<organism>
    <name type="scientific">Escherichia coli O157:H7</name>
    <dbReference type="NCBI Taxonomy" id="83334"/>
    <lineage>
        <taxon>Bacteria</taxon>
        <taxon>Pseudomonadati</taxon>
        <taxon>Pseudomonadota</taxon>
        <taxon>Gammaproteobacteria</taxon>
        <taxon>Enterobacterales</taxon>
        <taxon>Enterobacteriaceae</taxon>
        <taxon>Escherichia</taxon>
    </lineage>
</organism>
<comment type="function">
    <text evidence="1">Involved in formation of the rod shape of the cell. May also contribute to regulation of formation of penicillin-binding proteins (By similarity).</text>
</comment>
<comment type="subcellular location">
    <subcellularLocation>
        <location evidence="1">Cell inner membrane</location>
        <topology evidence="1">Multi-pass membrane protein</topology>
    </subcellularLocation>
</comment>
<comment type="similarity">
    <text evidence="3">Belongs to the MreD family.</text>
</comment>